<comment type="function">
    <text evidence="1">Binds 23S rRNA and is also seen to make contacts with the A and possibly P site tRNAs.</text>
</comment>
<comment type="subunit">
    <text evidence="1">Part of the 50S ribosomal subunit.</text>
</comment>
<comment type="similarity">
    <text evidence="1">Belongs to the universal ribosomal protein uL16 family.</text>
</comment>
<accession>B2A4E6</accession>
<protein>
    <recommendedName>
        <fullName evidence="1">Large ribosomal subunit protein uL16</fullName>
    </recommendedName>
    <alternativeName>
        <fullName evidence="2">50S ribosomal protein L16</fullName>
    </alternativeName>
</protein>
<organism>
    <name type="scientific">Natranaerobius thermophilus (strain ATCC BAA-1301 / DSM 18059 / JW/NM-WN-LF)</name>
    <dbReference type="NCBI Taxonomy" id="457570"/>
    <lineage>
        <taxon>Bacteria</taxon>
        <taxon>Bacillati</taxon>
        <taxon>Bacillota</taxon>
        <taxon>Clostridia</taxon>
        <taxon>Natranaerobiales</taxon>
        <taxon>Natranaerobiaceae</taxon>
        <taxon>Natranaerobius</taxon>
    </lineage>
</organism>
<dbReference type="EMBL" id="CP001034">
    <property type="protein sequence ID" value="ACB83800.1"/>
    <property type="molecule type" value="Genomic_DNA"/>
</dbReference>
<dbReference type="RefSeq" id="WP_012446689.1">
    <property type="nucleotide sequence ID" value="NC_010718.1"/>
</dbReference>
<dbReference type="SMR" id="B2A4E6"/>
<dbReference type="FunCoup" id="B2A4E6">
    <property type="interactions" value="383"/>
</dbReference>
<dbReference type="STRING" id="457570.Nther_0201"/>
<dbReference type="KEGG" id="nth:Nther_0201"/>
<dbReference type="eggNOG" id="COG0197">
    <property type="taxonomic scope" value="Bacteria"/>
</dbReference>
<dbReference type="HOGENOM" id="CLU_078858_2_1_9"/>
<dbReference type="InParanoid" id="B2A4E6"/>
<dbReference type="OrthoDB" id="9802589at2"/>
<dbReference type="Proteomes" id="UP000001683">
    <property type="component" value="Chromosome"/>
</dbReference>
<dbReference type="GO" id="GO:0022625">
    <property type="term" value="C:cytosolic large ribosomal subunit"/>
    <property type="evidence" value="ECO:0007669"/>
    <property type="project" value="TreeGrafter"/>
</dbReference>
<dbReference type="GO" id="GO:0019843">
    <property type="term" value="F:rRNA binding"/>
    <property type="evidence" value="ECO:0007669"/>
    <property type="project" value="UniProtKB-UniRule"/>
</dbReference>
<dbReference type="GO" id="GO:0003735">
    <property type="term" value="F:structural constituent of ribosome"/>
    <property type="evidence" value="ECO:0007669"/>
    <property type="project" value="InterPro"/>
</dbReference>
<dbReference type="GO" id="GO:0000049">
    <property type="term" value="F:tRNA binding"/>
    <property type="evidence" value="ECO:0007669"/>
    <property type="project" value="UniProtKB-KW"/>
</dbReference>
<dbReference type="GO" id="GO:0006412">
    <property type="term" value="P:translation"/>
    <property type="evidence" value="ECO:0007669"/>
    <property type="project" value="UniProtKB-UniRule"/>
</dbReference>
<dbReference type="CDD" id="cd01433">
    <property type="entry name" value="Ribosomal_L16_L10e"/>
    <property type="match status" value="1"/>
</dbReference>
<dbReference type="FunFam" id="3.90.1170.10:FF:000001">
    <property type="entry name" value="50S ribosomal protein L16"/>
    <property type="match status" value="1"/>
</dbReference>
<dbReference type="Gene3D" id="3.90.1170.10">
    <property type="entry name" value="Ribosomal protein L10e/L16"/>
    <property type="match status" value="1"/>
</dbReference>
<dbReference type="HAMAP" id="MF_01342">
    <property type="entry name" value="Ribosomal_uL16"/>
    <property type="match status" value="1"/>
</dbReference>
<dbReference type="InterPro" id="IPR047873">
    <property type="entry name" value="Ribosomal_uL16"/>
</dbReference>
<dbReference type="InterPro" id="IPR000114">
    <property type="entry name" value="Ribosomal_uL16_bact-type"/>
</dbReference>
<dbReference type="InterPro" id="IPR020798">
    <property type="entry name" value="Ribosomal_uL16_CS"/>
</dbReference>
<dbReference type="InterPro" id="IPR016180">
    <property type="entry name" value="Ribosomal_uL16_dom"/>
</dbReference>
<dbReference type="InterPro" id="IPR036920">
    <property type="entry name" value="Ribosomal_uL16_sf"/>
</dbReference>
<dbReference type="NCBIfam" id="TIGR01164">
    <property type="entry name" value="rplP_bact"/>
    <property type="match status" value="1"/>
</dbReference>
<dbReference type="PANTHER" id="PTHR12220">
    <property type="entry name" value="50S/60S RIBOSOMAL PROTEIN L16"/>
    <property type="match status" value="1"/>
</dbReference>
<dbReference type="PANTHER" id="PTHR12220:SF13">
    <property type="entry name" value="LARGE RIBOSOMAL SUBUNIT PROTEIN UL16M"/>
    <property type="match status" value="1"/>
</dbReference>
<dbReference type="Pfam" id="PF00252">
    <property type="entry name" value="Ribosomal_L16"/>
    <property type="match status" value="1"/>
</dbReference>
<dbReference type="PRINTS" id="PR00060">
    <property type="entry name" value="RIBOSOMALL16"/>
</dbReference>
<dbReference type="SUPFAM" id="SSF54686">
    <property type="entry name" value="Ribosomal protein L16p/L10e"/>
    <property type="match status" value="1"/>
</dbReference>
<dbReference type="PROSITE" id="PS00586">
    <property type="entry name" value="RIBOSOMAL_L16_1"/>
    <property type="match status" value="1"/>
</dbReference>
<dbReference type="PROSITE" id="PS00701">
    <property type="entry name" value="RIBOSOMAL_L16_2"/>
    <property type="match status" value="1"/>
</dbReference>
<feature type="chain" id="PRO_1000143001" description="Large ribosomal subunit protein uL16">
    <location>
        <begin position="1"/>
        <end position="144"/>
    </location>
</feature>
<reference key="1">
    <citation type="submission" date="2008-04" db="EMBL/GenBank/DDBJ databases">
        <title>Complete sequence of chromosome of Natranaerobius thermophilus JW/NM-WN-LF.</title>
        <authorList>
            <consortium name="US DOE Joint Genome Institute"/>
            <person name="Copeland A."/>
            <person name="Lucas S."/>
            <person name="Lapidus A."/>
            <person name="Glavina del Rio T."/>
            <person name="Dalin E."/>
            <person name="Tice H."/>
            <person name="Bruce D."/>
            <person name="Goodwin L."/>
            <person name="Pitluck S."/>
            <person name="Chertkov O."/>
            <person name="Brettin T."/>
            <person name="Detter J.C."/>
            <person name="Han C."/>
            <person name="Kuske C.R."/>
            <person name="Schmutz J."/>
            <person name="Larimer F."/>
            <person name="Land M."/>
            <person name="Hauser L."/>
            <person name="Kyrpides N."/>
            <person name="Lykidis A."/>
            <person name="Mesbah N.M."/>
            <person name="Wiegel J."/>
        </authorList>
    </citation>
    <scope>NUCLEOTIDE SEQUENCE [LARGE SCALE GENOMIC DNA]</scope>
    <source>
        <strain>ATCC BAA-1301 / DSM 18059 / JW/NM-WN-LF</strain>
    </source>
</reference>
<proteinExistence type="inferred from homology"/>
<keyword id="KW-1185">Reference proteome</keyword>
<keyword id="KW-0687">Ribonucleoprotein</keyword>
<keyword id="KW-0689">Ribosomal protein</keyword>
<keyword id="KW-0694">RNA-binding</keyword>
<keyword id="KW-0699">rRNA-binding</keyword>
<keyword id="KW-0820">tRNA-binding</keyword>
<evidence type="ECO:0000255" key="1">
    <source>
        <dbReference type="HAMAP-Rule" id="MF_01342"/>
    </source>
</evidence>
<evidence type="ECO:0000305" key="2"/>
<gene>
    <name evidence="1" type="primary">rplP</name>
    <name type="ordered locus">Nther_0201</name>
</gene>
<sequence length="144" mass="16139">MLMPKRTKFRRQMRGRMKGKAKGGKEIAFGEFGLQALEPAWINSRQIEAARIALTRYIKRGGKVWVKIFPDKPVTQKPAETRMGGGKGSPEFWAAVVKPGRILFEVAGVPKETAREAMRLASHKLPIKTKFVEREEMGGDANES</sequence>
<name>RL16_NATTJ</name>